<reference key="1">
    <citation type="journal article" date="2001" name="Brain Res.">
        <title>Differential expression of CPD1 during postnatal development in the mouse cerebellum.</title>
        <authorList>
            <person name="Radrizzani M."/>
            <person name="Vila-Ortiz G."/>
            <person name="Cafferata E.G.A."/>
            <person name="Di Tella M.C."/>
            <person name="Gonzalez-Guerrico A."/>
            <person name="Perandones C."/>
            <person name="Pivetta O.H."/>
            <person name="Carminatti H."/>
            <person name="Idoyaga Vargas V.P."/>
            <person name="Santa-Coloma T.A."/>
        </authorList>
    </citation>
    <scope>NUCLEOTIDE SEQUENCE [MRNA] (ISOFORM 1)</scope>
    <scope>FUNCTION</scope>
    <scope>SUBCELLULAR LOCATION</scope>
    <scope>TISSUE SPECIFICITY</scope>
    <scope>DEVELOPMENTAL STAGE</scope>
    <source>
        <strain>C57BL/6J</strain>
        <tissue>Cerebellum</tissue>
    </source>
</reference>
<reference key="2">
    <citation type="journal article" date="2000" name="FEBS Lett.">
        <title>Characterization of the nuclear transport of a novel leucine-rich acidic nuclear protein-like protein.</title>
        <authorList>
            <person name="Matsubae M."/>
            <person name="Kurihara T."/>
            <person name="Tachibana T."/>
            <person name="Imamoto N."/>
            <person name="Yoneda Y."/>
        </authorList>
    </citation>
    <scope>NUCLEOTIDE SEQUENCE [MRNA] (ISOFORM 1)</scope>
    <scope>INTERACTION WITH KPNA1 AND KPNA2</scope>
    <source>
        <strain>C57BL/6J</strain>
        <tissue>Brain</tissue>
    </source>
</reference>
<reference evidence="14" key="3">
    <citation type="journal article" date="2009" name="PLoS Biol.">
        <title>Lineage-specific biology revealed by a finished genome assembly of the mouse.</title>
        <authorList>
            <person name="Church D.M."/>
            <person name="Goodstadt L."/>
            <person name="Hillier L.W."/>
            <person name="Zody M.C."/>
            <person name="Goldstein S."/>
            <person name="She X."/>
            <person name="Bult C.J."/>
            <person name="Agarwala R."/>
            <person name="Cherry J.L."/>
            <person name="DiCuccio M."/>
            <person name="Hlavina W."/>
            <person name="Kapustin Y."/>
            <person name="Meric P."/>
            <person name="Maglott D."/>
            <person name="Birtle Z."/>
            <person name="Marques A.C."/>
            <person name="Graves T."/>
            <person name="Zhou S."/>
            <person name="Teague B."/>
            <person name="Potamousis K."/>
            <person name="Churas C."/>
            <person name="Place M."/>
            <person name="Herschleb J."/>
            <person name="Runnheim R."/>
            <person name="Forrest D."/>
            <person name="Amos-Landgraf J."/>
            <person name="Schwartz D.C."/>
            <person name="Cheng Z."/>
            <person name="Lindblad-Toh K."/>
            <person name="Eichler E.E."/>
            <person name="Ponting C.P."/>
        </authorList>
    </citation>
    <scope>NUCLEOTIDE SEQUENCE [LARGE SCALE GENOMIC DNA]</scope>
    <source>
        <strain evidence="14">C57BL/6J</strain>
    </source>
</reference>
<reference key="4">
    <citation type="journal article" date="2005" name="Science">
        <title>The transcriptional landscape of the mammalian genome.</title>
        <authorList>
            <person name="Carninci P."/>
            <person name="Kasukawa T."/>
            <person name="Katayama S."/>
            <person name="Gough J."/>
            <person name="Frith M.C."/>
            <person name="Maeda N."/>
            <person name="Oyama R."/>
            <person name="Ravasi T."/>
            <person name="Lenhard B."/>
            <person name="Wells C."/>
            <person name="Kodzius R."/>
            <person name="Shimokawa K."/>
            <person name="Bajic V.B."/>
            <person name="Brenner S.E."/>
            <person name="Batalov S."/>
            <person name="Forrest A.R."/>
            <person name="Zavolan M."/>
            <person name="Davis M.J."/>
            <person name="Wilming L.G."/>
            <person name="Aidinis V."/>
            <person name="Allen J.E."/>
            <person name="Ambesi-Impiombato A."/>
            <person name="Apweiler R."/>
            <person name="Aturaliya R.N."/>
            <person name="Bailey T.L."/>
            <person name="Bansal M."/>
            <person name="Baxter L."/>
            <person name="Beisel K.W."/>
            <person name="Bersano T."/>
            <person name="Bono H."/>
            <person name="Chalk A.M."/>
            <person name="Chiu K.P."/>
            <person name="Choudhary V."/>
            <person name="Christoffels A."/>
            <person name="Clutterbuck D.R."/>
            <person name="Crowe M.L."/>
            <person name="Dalla E."/>
            <person name="Dalrymple B.P."/>
            <person name="de Bono B."/>
            <person name="Della Gatta G."/>
            <person name="di Bernardo D."/>
            <person name="Down T."/>
            <person name="Engstrom P."/>
            <person name="Fagiolini M."/>
            <person name="Faulkner G."/>
            <person name="Fletcher C.F."/>
            <person name="Fukushima T."/>
            <person name="Furuno M."/>
            <person name="Futaki S."/>
            <person name="Gariboldi M."/>
            <person name="Georgii-Hemming P."/>
            <person name="Gingeras T.R."/>
            <person name="Gojobori T."/>
            <person name="Green R.E."/>
            <person name="Gustincich S."/>
            <person name="Harbers M."/>
            <person name="Hayashi Y."/>
            <person name="Hensch T.K."/>
            <person name="Hirokawa N."/>
            <person name="Hill D."/>
            <person name="Huminiecki L."/>
            <person name="Iacono M."/>
            <person name="Ikeo K."/>
            <person name="Iwama A."/>
            <person name="Ishikawa T."/>
            <person name="Jakt M."/>
            <person name="Kanapin A."/>
            <person name="Katoh M."/>
            <person name="Kawasawa Y."/>
            <person name="Kelso J."/>
            <person name="Kitamura H."/>
            <person name="Kitano H."/>
            <person name="Kollias G."/>
            <person name="Krishnan S.P."/>
            <person name="Kruger A."/>
            <person name="Kummerfeld S.K."/>
            <person name="Kurochkin I.V."/>
            <person name="Lareau L.F."/>
            <person name="Lazarevic D."/>
            <person name="Lipovich L."/>
            <person name="Liu J."/>
            <person name="Liuni S."/>
            <person name="McWilliam S."/>
            <person name="Madan Babu M."/>
            <person name="Madera M."/>
            <person name="Marchionni L."/>
            <person name="Matsuda H."/>
            <person name="Matsuzawa S."/>
            <person name="Miki H."/>
            <person name="Mignone F."/>
            <person name="Miyake S."/>
            <person name="Morris K."/>
            <person name="Mottagui-Tabar S."/>
            <person name="Mulder N."/>
            <person name="Nakano N."/>
            <person name="Nakauchi H."/>
            <person name="Ng P."/>
            <person name="Nilsson R."/>
            <person name="Nishiguchi S."/>
            <person name="Nishikawa S."/>
            <person name="Nori F."/>
            <person name="Ohara O."/>
            <person name="Okazaki Y."/>
            <person name="Orlando V."/>
            <person name="Pang K.C."/>
            <person name="Pavan W.J."/>
            <person name="Pavesi G."/>
            <person name="Pesole G."/>
            <person name="Petrovsky N."/>
            <person name="Piazza S."/>
            <person name="Reed J."/>
            <person name="Reid J.F."/>
            <person name="Ring B.Z."/>
            <person name="Ringwald M."/>
            <person name="Rost B."/>
            <person name="Ruan Y."/>
            <person name="Salzberg S.L."/>
            <person name="Sandelin A."/>
            <person name="Schneider C."/>
            <person name="Schoenbach C."/>
            <person name="Sekiguchi K."/>
            <person name="Semple C.A."/>
            <person name="Seno S."/>
            <person name="Sessa L."/>
            <person name="Sheng Y."/>
            <person name="Shibata Y."/>
            <person name="Shimada H."/>
            <person name="Shimada K."/>
            <person name="Silva D."/>
            <person name="Sinclair B."/>
            <person name="Sperling S."/>
            <person name="Stupka E."/>
            <person name="Sugiura K."/>
            <person name="Sultana R."/>
            <person name="Takenaka Y."/>
            <person name="Taki K."/>
            <person name="Tammoja K."/>
            <person name="Tan S.L."/>
            <person name="Tang S."/>
            <person name="Taylor M.S."/>
            <person name="Tegner J."/>
            <person name="Teichmann S.A."/>
            <person name="Ueda H.R."/>
            <person name="van Nimwegen E."/>
            <person name="Verardo R."/>
            <person name="Wei C.L."/>
            <person name="Yagi K."/>
            <person name="Yamanishi H."/>
            <person name="Zabarovsky E."/>
            <person name="Zhu S."/>
            <person name="Zimmer A."/>
            <person name="Hide W."/>
            <person name="Bult C."/>
            <person name="Grimmond S.M."/>
            <person name="Teasdale R.D."/>
            <person name="Liu E.T."/>
            <person name="Brusic V."/>
            <person name="Quackenbush J."/>
            <person name="Wahlestedt C."/>
            <person name="Mattick J.S."/>
            <person name="Hume D.A."/>
            <person name="Kai C."/>
            <person name="Sasaki D."/>
            <person name="Tomaru Y."/>
            <person name="Fukuda S."/>
            <person name="Kanamori-Katayama M."/>
            <person name="Suzuki M."/>
            <person name="Aoki J."/>
            <person name="Arakawa T."/>
            <person name="Iida J."/>
            <person name="Imamura K."/>
            <person name="Itoh M."/>
            <person name="Kato T."/>
            <person name="Kawaji H."/>
            <person name="Kawagashira N."/>
            <person name="Kawashima T."/>
            <person name="Kojima M."/>
            <person name="Kondo S."/>
            <person name="Konno H."/>
            <person name="Nakano K."/>
            <person name="Ninomiya N."/>
            <person name="Nishio T."/>
            <person name="Okada M."/>
            <person name="Plessy C."/>
            <person name="Shibata K."/>
            <person name="Shiraki T."/>
            <person name="Suzuki S."/>
            <person name="Tagami M."/>
            <person name="Waki K."/>
            <person name="Watahiki A."/>
            <person name="Okamura-Oho Y."/>
            <person name="Suzuki H."/>
            <person name="Kawai J."/>
            <person name="Hayashizaki Y."/>
        </authorList>
    </citation>
    <scope>NUCLEOTIDE SEQUENCE [LARGE SCALE MRNA] (ISOFORMS 1 AND 2)</scope>
    <source>
        <strain>C57BL/6J</strain>
        <strain>NOD</strain>
        <tissue>Embryo</tissue>
        <tissue>Kidney</tissue>
        <tissue>Spinal cord</tissue>
        <tissue>Thymus</tissue>
    </source>
</reference>
<reference key="5">
    <citation type="journal article" date="2004" name="Genome Res.">
        <title>The status, quality, and expansion of the NIH full-length cDNA project: the Mammalian Gene Collection (MGC).</title>
        <authorList>
            <consortium name="The MGC Project Team"/>
        </authorList>
    </citation>
    <scope>NUCLEOTIDE SEQUENCE [LARGE SCALE MRNA] (ISOFORM 1)</scope>
    <source>
        <tissue>Eye</tissue>
        <tissue>Mammary gland</tissue>
    </source>
</reference>
<reference key="6">
    <citation type="journal article" date="2003" name="Cerebellum">
        <title>Anp32e (Cpd1) and related protein phosphatase 2 inhibitors.</title>
        <authorList>
            <person name="Santa-Coloma T.A."/>
        </authorList>
    </citation>
    <scope>FUNCTION</scope>
</reference>
<reference key="7">
    <citation type="journal article" date="2006" name="Eur. J. Neurosci.">
        <title>Anp32e/Cpd1 regulates protein phosphatase 2A activity at synapses during synaptogenesis.</title>
        <authorList>
            <person name="Costanzo R.V."/>
            <person name="Vila-Ortiz G.J."/>
            <person name="Perandones C."/>
            <person name="Carminatti H."/>
            <person name="Matilla A."/>
            <person name="Radrizzani M."/>
        </authorList>
    </citation>
    <scope>FUNCTION</scope>
    <scope>SUBCELLULAR LOCATION</scope>
</reference>
<reference key="8">
    <citation type="journal article" date="2005" name="Cerebellum">
        <title>The Anp32 family of proteins containing leucine-rich repeats.</title>
        <authorList>
            <person name="Matilla A."/>
            <person name="Radrizzani M."/>
        </authorList>
    </citation>
    <scope>GENE FAMILY</scope>
    <scope>NOMENCLATURE</scope>
</reference>
<reference key="9">
    <citation type="journal article" date="2010" name="Cell">
        <title>A tissue-specific atlas of mouse protein phosphorylation and expression.</title>
        <authorList>
            <person name="Huttlin E.L."/>
            <person name="Jedrychowski M.P."/>
            <person name="Elias J.E."/>
            <person name="Goswami T."/>
            <person name="Rad R."/>
            <person name="Beausoleil S.A."/>
            <person name="Villen J."/>
            <person name="Haas W."/>
            <person name="Sowa M.E."/>
            <person name="Gygi S.P."/>
        </authorList>
    </citation>
    <scope>IDENTIFICATION BY MASS SPECTROMETRY [LARGE SCALE ANALYSIS]</scope>
    <source>
        <tissue>Brain</tissue>
        <tissue>Brown adipose tissue</tissue>
        <tissue>Heart</tissue>
        <tissue>Kidney</tissue>
        <tissue>Liver</tissue>
        <tissue>Lung</tissue>
        <tissue>Pancreas</tissue>
        <tissue>Spleen</tissue>
        <tissue>Testis</tissue>
    </source>
</reference>
<reference key="10">
    <citation type="journal article" date="2010" name="PLoS ONE">
        <title>Cpd-1 null mice display a subtle neurological phenotype.</title>
        <authorList>
            <person name="Kular R.K."/>
            <person name="Gogliotti R.G."/>
            <person name="Opal P."/>
        </authorList>
    </citation>
    <scope>DISRUPTION PHENOTYPE</scope>
</reference>
<reference key="11">
    <citation type="journal article" date="2010" name="PLoS ONE">
        <title>Generation and characterization of the Anp32e-deficient mouse.</title>
        <authorList>
            <person name="Reilly P.T."/>
            <person name="Afzal S."/>
            <person name="Wakeham A."/>
            <person name="Haight J."/>
            <person name="You-Ten A."/>
            <person name="Zaugg K."/>
            <person name="Dembowy J."/>
            <person name="Young A."/>
            <person name="Mak T.W."/>
        </authorList>
    </citation>
    <scope>DISRUPTION PHENOTYPE</scope>
</reference>
<reference key="12">
    <citation type="journal article" date="2013" name="PLoS ONE">
        <title>Targeted ANP32E mutant mice do not demonstrate obvious movement defects.</title>
        <authorList>
            <person name="Wong P."/>
            <person name="Leo V.I."/>
            <person name="Low M."/>
            <person name="Mak T.W."/>
            <person name="Zhang X."/>
            <person name="Reilly P.T."/>
        </authorList>
    </citation>
    <scope>DISRUPTION PHENOTYPE</scope>
</reference>
<reference key="13">
    <citation type="journal article" date="2014" name="Nature">
        <title>ANP32E is a histone chaperone that removes H2A.Z from chromatin.</title>
        <authorList>
            <person name="Obri A."/>
            <person name="Ouararhni K."/>
            <person name="Papin C."/>
            <person name="Diebold M.L."/>
            <person name="Padmanabhan K."/>
            <person name="Marek M."/>
            <person name="Stoll I."/>
            <person name="Roy L."/>
            <person name="Reilly P.T."/>
            <person name="Mak T.W."/>
            <person name="Dimitrov S."/>
            <person name="Romier C."/>
            <person name="Hamiche A."/>
        </authorList>
    </citation>
    <scope>DISRUPTION PHENOTYPE</scope>
    <scope>FUNCTION</scope>
</reference>
<proteinExistence type="evidence at protein level"/>
<feature type="chain" id="PRO_0000137600" description="Acidic leucine-rich nuclear phosphoprotein 32 family member E">
    <location>
        <begin position="1"/>
        <end position="260"/>
    </location>
</feature>
<feature type="repeat" description="LRR 1">
    <location>
        <begin position="18"/>
        <end position="38"/>
    </location>
</feature>
<feature type="repeat" description="LRR 2">
    <location>
        <begin position="43"/>
        <end position="64"/>
    </location>
</feature>
<feature type="repeat" description="LRR 3">
    <location>
        <begin position="65"/>
        <end position="87"/>
    </location>
</feature>
<feature type="repeat" description="LRR 4">
    <location>
        <begin position="89"/>
        <end position="110"/>
    </location>
</feature>
<feature type="domain" description="LRRCT">
    <location>
        <begin position="123"/>
        <end position="161"/>
    </location>
</feature>
<feature type="region of interest" description="Disordered" evidence="3">
    <location>
        <begin position="149"/>
        <end position="260"/>
    </location>
</feature>
<feature type="region of interest" description="ZID domain" evidence="1">
    <location>
        <begin position="207"/>
        <end position="260"/>
    </location>
</feature>
<feature type="compositionally biased region" description="Acidic residues" evidence="3">
    <location>
        <begin position="149"/>
        <end position="208"/>
    </location>
</feature>
<feature type="compositionally biased region" description="Acidic residues" evidence="3">
    <location>
        <begin position="218"/>
        <end position="240"/>
    </location>
</feature>
<feature type="compositionally biased region" description="Basic and acidic residues" evidence="3">
    <location>
        <begin position="241"/>
        <end position="251"/>
    </location>
</feature>
<feature type="modified residue" description="N-acetylmethionine" evidence="2">
    <location>
        <position position="1"/>
    </location>
</feature>
<feature type="cross-link" description="Glycyl lysine isopeptide (Lys-Gly) (interchain with G-Cter in SUMO2)" evidence="2">
    <location>
        <position position="68"/>
    </location>
</feature>
<feature type="splice variant" id="VSP_059599" description="In isoform 3." evidence="13">
    <location>
        <begin position="19"/>
        <end position="141"/>
    </location>
</feature>
<feature type="splice variant" id="VSP_007373" description="In isoform 2." evidence="12">
    <location>
        <begin position="208"/>
        <end position="219"/>
    </location>
</feature>
<feature type="sequence conflict" description="In Ref. 4; BAE35090." evidence="13" ref="4">
    <original>N</original>
    <variation>D</variation>
    <location>
        <position position="38"/>
    </location>
</feature>
<feature type="sequence conflict" description="In Ref. 4; BAB28449." evidence="13" ref="4">
    <original>N</original>
    <variation>D</variation>
    <location>
        <position position="98"/>
    </location>
</feature>
<feature type="sequence conflict" description="In Ref. 4; BAC33858." evidence="13" ref="4">
    <original>S</original>
    <variation>T</variation>
    <location>
        <position position="199"/>
    </location>
</feature>
<comment type="function">
    <text evidence="5 6 7 11">Histone chaperone that specifically mediates the genome-wide removal of histone H2A.Z/H2AZ1 from the nucleosome: removes H2A.Z/H2AZ1 from its normal sites of deposition, especially from enhancer and insulator regions. Not involved in deposition of H2A.Z/H2AZ1 in the nucleosome. May stabilize the evicted H2A.Z/H2AZ1-H2B dimer, thus shifting the equilibrium towards dissociation and the off-chromatin state (PubMed:24463511). Inhibits activity of protein phosphatase 2A (PP2A). Does not inhibit protein phosphatase 1. May play a role in cerebellar development and synaptogenesis.</text>
</comment>
<comment type="subunit">
    <text evidence="1 4">Component of a SWR1-like complex, composed of EP400, KAT5/TIP60, TRRAP, BRD8, RUVBL1, RUVBL2, ING3 and ANP32E; the complex does not contain SRCAP. Interacts with H2A.Z/H2AZ1 (By similarity). Interacts with the importin alpha KPNA1 and KPNA2.</text>
</comment>
<comment type="subcellular location">
    <subcellularLocation>
        <location>Cytoplasm</location>
    </subcellularLocation>
    <subcellularLocation>
        <location>Nucleus</location>
    </subcellularLocation>
</comment>
<comment type="alternative products">
    <event type="alternative splicing"/>
    <isoform>
        <id>P97822-1</id>
        <name>1</name>
        <sequence type="displayed"/>
    </isoform>
    <isoform>
        <id>P97822-2</id>
        <name>2</name>
        <sequence type="described" ref="VSP_007373"/>
    </isoform>
    <isoform>
        <id>P97822-3</id>
        <name>3</name>
        <sequence type="described" ref="VSP_059599"/>
    </isoform>
</comment>
<comment type="tissue specificity">
    <text evidence="5">Expressed at highest levels in cerebellum and spleen. In the cerebellum, expressed mainly in granule cells and, to a lesser extent, in Purkinje cells.</text>
</comment>
<comment type="developmental stage">
    <text evidence="5">Low levels are found at postnatal day 4. Levels increase from postnatal day 7 to postnatal day 17. Levels decrease and remain low in the adult.</text>
</comment>
<comment type="domain">
    <text evidence="1">The H2A.Z-interacting domain (ZID) mediates a direct interaction with H2A.Z/H2AZ1.</text>
</comment>
<comment type="PTM">
    <text evidence="1">Phosphorylated. The phosphorylation is nuclear localization signal (NLS)-dependent (By similarity).</text>
</comment>
<comment type="disruption phenotype">
    <text evidence="8 9 10 11">No visible phenotype. Mice are viable and fertile (PubMed:20844742, PubMed:21049064, PubMed:23675506). They display a subtle neurological clasping phenotype and mild motor deficits (PubMed:20844742). Motor defects were not confirmed by a subsequent analysis (PubMed:23675506). Deletion in embryonic fibroblasts results in the appearance of a significant number of new H2A.Z/H2AZ1 around the transcription start site as well as at other chromatin regions (PubMed:24463511).</text>
</comment>
<comment type="similarity">
    <text evidence="13">Belongs to the ANP32 family.</text>
</comment>
<protein>
    <recommendedName>
        <fullName>Acidic leucine-rich nuclear phosphoprotein 32 family member E</fullName>
    </recommendedName>
    <alternativeName>
        <fullName>Cerebellar postnatal development protein 1</fullName>
    </alternativeName>
    <alternativeName>
        <fullName>LANP-like protein</fullName>
        <shortName>LANP-L</shortName>
    </alternativeName>
</protein>
<dbReference type="EMBL" id="U89345">
    <property type="protein sequence ID" value="AAB49462.2"/>
    <property type="molecule type" value="mRNA"/>
</dbReference>
<dbReference type="EMBL" id="AB037685">
    <property type="protein sequence ID" value="BAB03507.1"/>
    <property type="molecule type" value="mRNA"/>
</dbReference>
<dbReference type="EMBL" id="AC092855">
    <property type="status" value="NOT_ANNOTATED_CDS"/>
    <property type="molecule type" value="Genomic_DNA"/>
</dbReference>
<dbReference type="EMBL" id="AK012759">
    <property type="protein sequence ID" value="BAB28449.1"/>
    <property type="molecule type" value="mRNA"/>
</dbReference>
<dbReference type="EMBL" id="AK049647">
    <property type="protein sequence ID" value="BAC33858.1"/>
    <property type="molecule type" value="mRNA"/>
</dbReference>
<dbReference type="EMBL" id="AK076049">
    <property type="protein sequence ID" value="BAC36147.1"/>
    <property type="molecule type" value="mRNA"/>
</dbReference>
<dbReference type="EMBL" id="AK088401">
    <property type="protein sequence ID" value="BAC40331.1"/>
    <property type="molecule type" value="mRNA"/>
</dbReference>
<dbReference type="EMBL" id="AK147888">
    <property type="protein sequence ID" value="BAE28205.1"/>
    <property type="molecule type" value="mRNA"/>
</dbReference>
<dbReference type="EMBL" id="AK159446">
    <property type="protein sequence ID" value="BAE35090.1"/>
    <property type="molecule type" value="mRNA"/>
</dbReference>
<dbReference type="EMBL" id="AK168380">
    <property type="protein sequence ID" value="BAE40309.1"/>
    <property type="molecule type" value="mRNA"/>
</dbReference>
<dbReference type="EMBL" id="BC005690">
    <property type="protein sequence ID" value="AAH05690.1"/>
    <property type="molecule type" value="mRNA"/>
</dbReference>
<dbReference type="EMBL" id="BC080684">
    <property type="protein sequence ID" value="AAH80684.1"/>
    <property type="molecule type" value="mRNA"/>
</dbReference>
<dbReference type="CCDS" id="CCDS17626.1">
    <molecule id="P97822-1"/>
</dbReference>
<dbReference type="CCDS" id="CCDS57238.1">
    <molecule id="P97822-2"/>
</dbReference>
<dbReference type="CCDS" id="CCDS57239.1">
    <molecule id="P97822-3"/>
</dbReference>
<dbReference type="RefSeq" id="NP_001240686.1">
    <molecule id="P97822-2"/>
    <property type="nucleotide sequence ID" value="NM_001253757.1"/>
</dbReference>
<dbReference type="RefSeq" id="NP_001240687.1">
    <molecule id="P97822-3"/>
    <property type="nucleotide sequence ID" value="NM_001253758.1"/>
</dbReference>
<dbReference type="RefSeq" id="NP_075699.3">
    <molecule id="P97822-1"/>
    <property type="nucleotide sequence ID" value="NM_023210.4"/>
</dbReference>
<dbReference type="SMR" id="P97822"/>
<dbReference type="BioGRID" id="211498">
    <property type="interactions" value="4"/>
</dbReference>
<dbReference type="FunCoup" id="P97822">
    <property type="interactions" value="3833"/>
</dbReference>
<dbReference type="IntAct" id="P97822">
    <property type="interactions" value="3"/>
</dbReference>
<dbReference type="STRING" id="10090.ENSMUSP00000128483"/>
<dbReference type="iPTMnet" id="P97822"/>
<dbReference type="PhosphoSitePlus" id="P97822"/>
<dbReference type="SwissPalm" id="P97822"/>
<dbReference type="jPOST" id="P97822"/>
<dbReference type="PaxDb" id="10090-ENSMUSP00000128483"/>
<dbReference type="PeptideAtlas" id="P97822"/>
<dbReference type="ProteomicsDB" id="282093">
    <molecule id="P97822-1"/>
</dbReference>
<dbReference type="ProteomicsDB" id="282094">
    <molecule id="P97822-2"/>
</dbReference>
<dbReference type="ProteomicsDB" id="357028"/>
<dbReference type="Pumba" id="P97822"/>
<dbReference type="Antibodypedia" id="20276">
    <property type="antibodies" value="130 antibodies from 30 providers"/>
</dbReference>
<dbReference type="DNASU" id="66471"/>
<dbReference type="Ensembl" id="ENSMUST00000015893.13">
    <molecule id="P97822-2"/>
    <property type="protein sequence ID" value="ENSMUSP00000015893.7"/>
    <property type="gene ID" value="ENSMUSG00000015749.13"/>
</dbReference>
<dbReference type="Ensembl" id="ENSMUST00000165307.8">
    <molecule id="P97822-1"/>
    <property type="protein sequence ID" value="ENSMUSP00000128483.2"/>
    <property type="gene ID" value="ENSMUSG00000015749.13"/>
</dbReference>
<dbReference type="Ensembl" id="ENSMUST00000171368.8">
    <molecule id="P97822-3"/>
    <property type="protein sequence ID" value="ENSMUSP00000130599.2"/>
    <property type="gene ID" value="ENSMUSG00000015749.13"/>
</dbReference>
<dbReference type="GeneID" id="66471"/>
<dbReference type="KEGG" id="mmu:66471"/>
<dbReference type="UCSC" id="uc008qlu.2">
    <molecule id="P97822-1"/>
    <property type="organism name" value="mouse"/>
</dbReference>
<dbReference type="UCSC" id="uc008qlv.2">
    <molecule id="P97822-2"/>
    <property type="organism name" value="mouse"/>
</dbReference>
<dbReference type="AGR" id="MGI:1913721"/>
<dbReference type="CTD" id="81611"/>
<dbReference type="MGI" id="MGI:1913721">
    <property type="gene designation" value="Anp32e"/>
</dbReference>
<dbReference type="VEuPathDB" id="HostDB:ENSMUSG00000015749"/>
<dbReference type="eggNOG" id="KOG2739">
    <property type="taxonomic scope" value="Eukaryota"/>
</dbReference>
<dbReference type="GeneTree" id="ENSGT00950000182907"/>
<dbReference type="InParanoid" id="P97822"/>
<dbReference type="OMA" id="LDNCRCV"/>
<dbReference type="OrthoDB" id="2160613at2759"/>
<dbReference type="PhylomeDB" id="P97822"/>
<dbReference type="TreeFam" id="TF317206"/>
<dbReference type="BioGRID-ORCS" id="66471">
    <property type="hits" value="2 hits in 77 CRISPR screens"/>
</dbReference>
<dbReference type="ChiTaRS" id="Anp32e">
    <property type="organism name" value="mouse"/>
</dbReference>
<dbReference type="PRO" id="PR:P97822"/>
<dbReference type="Proteomes" id="UP000000589">
    <property type="component" value="Chromosome 3"/>
</dbReference>
<dbReference type="RNAct" id="P97822">
    <property type="molecule type" value="protein"/>
</dbReference>
<dbReference type="Bgee" id="ENSMUSG00000015749">
    <property type="expression patterns" value="Expressed in embryonic post-anal tail and 267 other cell types or tissues"/>
</dbReference>
<dbReference type="ExpressionAtlas" id="P97822">
    <property type="expression patterns" value="baseline and differential"/>
</dbReference>
<dbReference type="GO" id="GO:0005737">
    <property type="term" value="C:cytoplasm"/>
    <property type="evidence" value="ECO:0000314"/>
    <property type="project" value="MGI"/>
</dbReference>
<dbReference type="GO" id="GO:0031410">
    <property type="term" value="C:cytoplasmic vesicle"/>
    <property type="evidence" value="ECO:0000314"/>
    <property type="project" value="MGI"/>
</dbReference>
<dbReference type="GO" id="GO:0098978">
    <property type="term" value="C:glutamatergic synapse"/>
    <property type="evidence" value="ECO:0000314"/>
    <property type="project" value="SynGO"/>
</dbReference>
<dbReference type="GO" id="GO:0005634">
    <property type="term" value="C:nucleus"/>
    <property type="evidence" value="ECO:0000314"/>
    <property type="project" value="MGI"/>
</dbReference>
<dbReference type="GO" id="GO:0098839">
    <property type="term" value="C:postsynaptic density membrane"/>
    <property type="evidence" value="ECO:0000314"/>
    <property type="project" value="SynGO"/>
</dbReference>
<dbReference type="GO" id="GO:0098895">
    <property type="term" value="C:postsynaptic endosome membrane"/>
    <property type="evidence" value="ECO:0000314"/>
    <property type="project" value="SynGO"/>
</dbReference>
<dbReference type="GO" id="GO:0000812">
    <property type="term" value="C:Swr1 complex"/>
    <property type="evidence" value="ECO:0000250"/>
    <property type="project" value="UniProtKB"/>
</dbReference>
<dbReference type="GO" id="GO:0030672">
    <property type="term" value="C:synaptic vesicle membrane"/>
    <property type="evidence" value="ECO:0000314"/>
    <property type="project" value="SynGO"/>
</dbReference>
<dbReference type="GO" id="GO:0042393">
    <property type="term" value="F:histone binding"/>
    <property type="evidence" value="ECO:0000250"/>
    <property type="project" value="UniProtKB"/>
</dbReference>
<dbReference type="GO" id="GO:0140713">
    <property type="term" value="F:histone chaperone activity"/>
    <property type="evidence" value="ECO:0000250"/>
    <property type="project" value="UniProtKB"/>
</dbReference>
<dbReference type="GO" id="GO:0019212">
    <property type="term" value="F:phosphatase inhibitor activity"/>
    <property type="evidence" value="ECO:0000314"/>
    <property type="project" value="MGI"/>
</dbReference>
<dbReference type="GO" id="GO:0006325">
    <property type="term" value="P:chromatin organization"/>
    <property type="evidence" value="ECO:0007669"/>
    <property type="project" value="UniProtKB-KW"/>
</dbReference>
<dbReference type="FunFam" id="3.80.10.10:FF:000003">
    <property type="entry name" value="Acidic leucine-rich nuclear phosphoprotein 32 family member A"/>
    <property type="match status" value="1"/>
</dbReference>
<dbReference type="Gene3D" id="3.80.10.10">
    <property type="entry name" value="Ribonuclease Inhibitor"/>
    <property type="match status" value="1"/>
</dbReference>
<dbReference type="InterPro" id="IPR045081">
    <property type="entry name" value="AN32"/>
</dbReference>
<dbReference type="InterPro" id="IPR001611">
    <property type="entry name" value="Leu-rich_rpt"/>
</dbReference>
<dbReference type="InterPro" id="IPR032675">
    <property type="entry name" value="LRR_dom_sf"/>
</dbReference>
<dbReference type="PANTHER" id="PTHR11375">
    <property type="entry name" value="ACIDIC LEUCINE-RICH NUCLEAR PHOSPHOPROTEIN 32"/>
    <property type="match status" value="1"/>
</dbReference>
<dbReference type="PANTHER" id="PTHR11375:SF5">
    <property type="entry name" value="ACIDIC LEUCINE-RICH NUCLEAR PHOSPHOPROTEIN 32 FAMILY MEMBER E"/>
    <property type="match status" value="1"/>
</dbReference>
<dbReference type="Pfam" id="PF14580">
    <property type="entry name" value="LRR_9"/>
    <property type="match status" value="1"/>
</dbReference>
<dbReference type="SUPFAM" id="SSF52058">
    <property type="entry name" value="L domain-like"/>
    <property type="match status" value="1"/>
</dbReference>
<dbReference type="PROSITE" id="PS51450">
    <property type="entry name" value="LRR"/>
    <property type="match status" value="4"/>
</dbReference>
<gene>
    <name type="primary">Anp32e</name>
    <name type="synonym">Cpd1</name>
</gene>
<name>AN32E_MOUSE</name>
<sequence length="260" mass="29622">MEMKKKINMELKNRAPEEVTELVLDNCLCVNGEIEGLNDTFKELEFLSMANVELSSLARLPSLNKLRKLELSDNIISGGLEVLAEKCPNLTYLNLSGNKIKDLSTVEALQNLKNLKSLDLFNCEITNLEDYRESIFELLQQITYLDGFDQEDNEAPDSEEEDDDDEDGDEDEEDEDEDEAGPPEGYEEEEDDDEDEAGSEVGEGEEEVGLSYLMKDEIQDEEDDDDYVDEGEEEEEEEEEGLRGEKRKRDAEDDGEEDDD</sequence>
<keyword id="KW-0007">Acetylation</keyword>
<keyword id="KW-0025">Alternative splicing</keyword>
<keyword id="KW-0143">Chaperone</keyword>
<keyword id="KW-0156">Chromatin regulator</keyword>
<keyword id="KW-0963">Cytoplasm</keyword>
<keyword id="KW-1017">Isopeptide bond</keyword>
<keyword id="KW-0433">Leucine-rich repeat</keyword>
<keyword id="KW-0539">Nucleus</keyword>
<keyword id="KW-0597">Phosphoprotein</keyword>
<keyword id="KW-1185">Reference proteome</keyword>
<keyword id="KW-0677">Repeat</keyword>
<keyword id="KW-0832">Ubl conjugation</keyword>
<evidence type="ECO:0000250" key="1"/>
<evidence type="ECO:0000250" key="2">
    <source>
        <dbReference type="UniProtKB" id="Q9BTT0"/>
    </source>
</evidence>
<evidence type="ECO:0000256" key="3">
    <source>
        <dbReference type="SAM" id="MobiDB-lite"/>
    </source>
</evidence>
<evidence type="ECO:0000269" key="4">
    <source>
    </source>
</evidence>
<evidence type="ECO:0000269" key="5">
    <source>
    </source>
</evidence>
<evidence type="ECO:0000269" key="6">
    <source>
    </source>
</evidence>
<evidence type="ECO:0000269" key="7">
    <source>
    </source>
</evidence>
<evidence type="ECO:0000269" key="8">
    <source>
    </source>
</evidence>
<evidence type="ECO:0000269" key="9">
    <source>
    </source>
</evidence>
<evidence type="ECO:0000269" key="10">
    <source>
    </source>
</evidence>
<evidence type="ECO:0000269" key="11">
    <source>
    </source>
</evidence>
<evidence type="ECO:0000303" key="12">
    <source>
    </source>
</evidence>
<evidence type="ECO:0000305" key="13"/>
<evidence type="ECO:0000312" key="14">
    <source>
        <dbReference type="Proteomes" id="UP000000589"/>
    </source>
</evidence>
<organism>
    <name type="scientific">Mus musculus</name>
    <name type="common">Mouse</name>
    <dbReference type="NCBI Taxonomy" id="10090"/>
    <lineage>
        <taxon>Eukaryota</taxon>
        <taxon>Metazoa</taxon>
        <taxon>Chordata</taxon>
        <taxon>Craniata</taxon>
        <taxon>Vertebrata</taxon>
        <taxon>Euteleostomi</taxon>
        <taxon>Mammalia</taxon>
        <taxon>Eutheria</taxon>
        <taxon>Euarchontoglires</taxon>
        <taxon>Glires</taxon>
        <taxon>Rodentia</taxon>
        <taxon>Myomorpha</taxon>
        <taxon>Muroidea</taxon>
        <taxon>Muridae</taxon>
        <taxon>Murinae</taxon>
        <taxon>Mus</taxon>
        <taxon>Mus</taxon>
    </lineage>
</organism>
<accession>P97822</accession>
<accession>E9Q5H9</accession>
<accession>Q3TH89</accession>
<accession>Q3TX26</accession>
<accession>Q8BPF8</accession>
<accession>Q8C2L4</accession>
<accession>Q8C7Q8</accession>
<accession>Q9CZD2</accession>